<name>Y089_RICCN</name>
<sequence>MSLTQILLILFVGILVTTPHDIFIIIKELKKIKAYLINIKSSIVKNIDEPLETEQVNFYLKKIINLEGYYHGSYDLTTIKEKYYTLIINNDLIENESVPDITEKH</sequence>
<organism>
    <name type="scientific">Rickettsia conorii (strain ATCC VR-613 / Malish 7)</name>
    <dbReference type="NCBI Taxonomy" id="272944"/>
    <lineage>
        <taxon>Bacteria</taxon>
        <taxon>Pseudomonadati</taxon>
        <taxon>Pseudomonadota</taxon>
        <taxon>Alphaproteobacteria</taxon>
        <taxon>Rickettsiales</taxon>
        <taxon>Rickettsiaceae</taxon>
        <taxon>Rickettsieae</taxon>
        <taxon>Rickettsia</taxon>
        <taxon>spotted fever group</taxon>
    </lineage>
</organism>
<comment type="subcellular location">
    <subcellularLocation>
        <location evidence="2">Membrane</location>
        <topology evidence="2">Single-pass membrane protein</topology>
    </subcellularLocation>
</comment>
<protein>
    <recommendedName>
        <fullName>Uncharacterized protein RC0089</fullName>
    </recommendedName>
</protein>
<feature type="chain" id="PRO_0000101308" description="Uncharacterized protein RC0089">
    <location>
        <begin position="1"/>
        <end position="105"/>
    </location>
</feature>
<feature type="transmembrane region" description="Helical" evidence="1">
    <location>
        <begin position="4"/>
        <end position="26"/>
    </location>
</feature>
<gene>
    <name type="ordered locus">RC0089</name>
</gene>
<dbReference type="EMBL" id="AE006914">
    <property type="protein sequence ID" value="AAL02627.1"/>
    <property type="molecule type" value="Genomic_DNA"/>
</dbReference>
<dbReference type="PIR" id="A97711">
    <property type="entry name" value="A97711"/>
</dbReference>
<dbReference type="RefSeq" id="WP_010976773.1">
    <property type="nucleotide sequence ID" value="NC_003103.1"/>
</dbReference>
<dbReference type="SMR" id="Q92JH8"/>
<dbReference type="GeneID" id="928111"/>
<dbReference type="KEGG" id="rco:RC0089"/>
<dbReference type="PATRIC" id="fig|272944.4.peg.106"/>
<dbReference type="HOGENOM" id="CLU_177035_0_0_5"/>
<dbReference type="Proteomes" id="UP000000816">
    <property type="component" value="Chromosome"/>
</dbReference>
<dbReference type="GO" id="GO:0016020">
    <property type="term" value="C:membrane"/>
    <property type="evidence" value="ECO:0007669"/>
    <property type="project" value="UniProtKB-SubCell"/>
</dbReference>
<dbReference type="InterPro" id="IPR022718">
    <property type="entry name" value="DUF2672"/>
</dbReference>
<dbReference type="Pfam" id="PF10878">
    <property type="entry name" value="DUF2672"/>
    <property type="match status" value="1"/>
</dbReference>
<proteinExistence type="predicted"/>
<evidence type="ECO:0000255" key="1"/>
<evidence type="ECO:0000305" key="2"/>
<accession>Q92JH8</accession>
<reference key="1">
    <citation type="journal article" date="2001" name="Science">
        <title>Mechanisms of evolution in Rickettsia conorii and R. prowazekii.</title>
        <authorList>
            <person name="Ogata H."/>
            <person name="Audic S."/>
            <person name="Renesto-Audiffren P."/>
            <person name="Fournier P.-E."/>
            <person name="Barbe V."/>
            <person name="Samson D."/>
            <person name="Roux V."/>
            <person name="Cossart P."/>
            <person name="Weissenbach J."/>
            <person name="Claverie J.-M."/>
            <person name="Raoult D."/>
        </authorList>
    </citation>
    <scope>NUCLEOTIDE SEQUENCE [LARGE SCALE GENOMIC DNA]</scope>
    <source>
        <strain>ATCC VR-613 / Malish 7</strain>
    </source>
</reference>
<keyword id="KW-0472">Membrane</keyword>
<keyword id="KW-0812">Transmembrane</keyword>
<keyword id="KW-1133">Transmembrane helix</keyword>